<accession>P0C677</accession>
<organism>
    <name type="scientific">Hepatitis B virus genotype B1 (isolate Japan/Ry30/2002)</name>
    <name type="common">HBV-B</name>
    <dbReference type="NCBI Taxonomy" id="489465"/>
    <lineage>
        <taxon>Viruses</taxon>
        <taxon>Riboviria</taxon>
        <taxon>Pararnavirae</taxon>
        <taxon>Artverviricota</taxon>
        <taxon>Revtraviricetes</taxon>
        <taxon>Blubervirales</taxon>
        <taxon>Hepadnaviridae</taxon>
        <taxon>Orthohepadnavirus</taxon>
        <taxon>Hepatitis B virus</taxon>
    </lineage>
</organism>
<name>CAPSD_HBVB8</name>
<dbReference type="EMBL" id="AB073854">
    <property type="status" value="NOT_ANNOTATED_CDS"/>
    <property type="molecule type" value="Genomic_DNA"/>
</dbReference>
<dbReference type="SMR" id="P0C677"/>
<dbReference type="Proteomes" id="UP000007919">
    <property type="component" value="Genome"/>
</dbReference>
<dbReference type="GO" id="GO:0043657">
    <property type="term" value="C:host cell"/>
    <property type="evidence" value="ECO:0007669"/>
    <property type="project" value="GOC"/>
</dbReference>
<dbReference type="GO" id="GO:0030430">
    <property type="term" value="C:host cell cytoplasm"/>
    <property type="evidence" value="ECO:0007669"/>
    <property type="project" value="UniProtKB-SubCell"/>
</dbReference>
<dbReference type="GO" id="GO:0039619">
    <property type="term" value="C:T=4 icosahedral viral capsid"/>
    <property type="evidence" value="ECO:0007669"/>
    <property type="project" value="UniProtKB-UniRule"/>
</dbReference>
<dbReference type="GO" id="GO:0003677">
    <property type="term" value="F:DNA binding"/>
    <property type="evidence" value="ECO:0007669"/>
    <property type="project" value="UniProtKB-UniRule"/>
</dbReference>
<dbReference type="GO" id="GO:0003723">
    <property type="term" value="F:RNA binding"/>
    <property type="evidence" value="ECO:0007669"/>
    <property type="project" value="UniProtKB-UniRule"/>
</dbReference>
<dbReference type="GO" id="GO:0005198">
    <property type="term" value="F:structural molecule activity"/>
    <property type="evidence" value="ECO:0007669"/>
    <property type="project" value="UniProtKB-UniRule"/>
</dbReference>
<dbReference type="GO" id="GO:0075521">
    <property type="term" value="P:microtubule-dependent intracellular transport of viral material towards nucleus"/>
    <property type="evidence" value="ECO:0007669"/>
    <property type="project" value="UniProtKB-UniRule"/>
</dbReference>
<dbReference type="GO" id="GO:0046718">
    <property type="term" value="P:symbiont entry into host cell"/>
    <property type="evidence" value="ECO:0007669"/>
    <property type="project" value="UniProtKB-UniRule"/>
</dbReference>
<dbReference type="GO" id="GO:0075732">
    <property type="term" value="P:viral penetration into host nucleus"/>
    <property type="evidence" value="ECO:0007669"/>
    <property type="project" value="UniProtKB-UniRule"/>
</dbReference>
<dbReference type="FunFam" id="1.10.4090.10:FF:000001">
    <property type="entry name" value="Capsid protein"/>
    <property type="match status" value="1"/>
</dbReference>
<dbReference type="Gene3D" id="1.10.4090.10">
    <property type="entry name" value="Viral capsid, core domain supefamily, Hepatitis B virus"/>
    <property type="match status" value="1"/>
</dbReference>
<dbReference type="HAMAP" id="MF_04076">
    <property type="entry name" value="HBV_HBEAG"/>
    <property type="match status" value="1"/>
</dbReference>
<dbReference type="InterPro" id="IPR002006">
    <property type="entry name" value="Hepatitis_core"/>
</dbReference>
<dbReference type="InterPro" id="IPR036459">
    <property type="entry name" value="Viral_capsid_core_dom_sf_HBV"/>
</dbReference>
<dbReference type="Pfam" id="PF00906">
    <property type="entry name" value="Hepatitis_core"/>
    <property type="match status" value="2"/>
</dbReference>
<dbReference type="SUPFAM" id="SSF47852">
    <property type="entry name" value="Hepatitis B viral capsid (hbcag)"/>
    <property type="match status" value="1"/>
</dbReference>
<keyword id="KW-0024">Alternative initiation</keyword>
<keyword id="KW-0167">Capsid protein</keyword>
<keyword id="KW-1176">Cytoplasmic inwards viral transport</keyword>
<keyword id="KW-0238">DNA-binding</keyword>
<keyword id="KW-1035">Host cytoplasm</keyword>
<keyword id="KW-0945">Host-virus interaction</keyword>
<keyword id="KW-1177">Microtubular inwards viral transport</keyword>
<keyword id="KW-0597">Phosphoprotein</keyword>
<keyword id="KW-0677">Repeat</keyword>
<keyword id="KW-0694">RNA-binding</keyword>
<keyword id="KW-1144">T=4 icosahedral capsid protein</keyword>
<keyword id="KW-1163">Viral penetration into host nucleus</keyword>
<keyword id="KW-0946">Virion</keyword>
<keyword id="KW-1160">Virus entry into host cell</keyword>
<protein>
    <recommendedName>
        <fullName evidence="1">Capsid protein</fullName>
    </recommendedName>
    <alternativeName>
        <fullName evidence="1">Core antigen</fullName>
    </alternativeName>
    <alternativeName>
        <fullName evidence="1">Core protein</fullName>
    </alternativeName>
    <alternativeName>
        <fullName evidence="1">HBcAg</fullName>
    </alternativeName>
    <alternativeName>
        <fullName evidence="1">p21.5</fullName>
    </alternativeName>
</protein>
<evidence type="ECO:0000255" key="1">
    <source>
        <dbReference type="HAMAP-Rule" id="MF_04076"/>
    </source>
</evidence>
<evidence type="ECO:0000256" key="2">
    <source>
        <dbReference type="SAM" id="MobiDB-lite"/>
    </source>
</evidence>
<sequence>MDIDPYKEFGASVELLSFLPSDFFPSVRDLLDTASALYREALESPEHCSPHHTAIRQAILCWVELMTLASWVGQNLQDQASRDLVVNYVNTNMGLKIRQLLWFHISCLTFEREVVLEYLVSFGVWIRTPPAYRPPNAPILSTLPETTVIRRRGRSPRRRTPSPRRRRSQSPRRRRSQSREPQC</sequence>
<organismHost>
    <name type="scientific">Homo sapiens</name>
    <name type="common">Human</name>
    <dbReference type="NCBI Taxonomy" id="9606"/>
</organismHost>
<organismHost>
    <name type="scientific">Pan troglodytes</name>
    <name type="common">Chimpanzee</name>
    <dbReference type="NCBI Taxonomy" id="9598"/>
</organismHost>
<feature type="chain" id="PRO_0000324361" description="Capsid protein">
    <location>
        <begin position="1"/>
        <end position="183"/>
    </location>
</feature>
<feature type="repeat" description="1; half-length">
    <location>
        <begin position="155"/>
        <end position="161"/>
    </location>
</feature>
<feature type="repeat" description="2">
    <location>
        <begin position="162"/>
        <end position="169"/>
    </location>
</feature>
<feature type="repeat" description="3">
    <location>
        <begin position="170"/>
        <end position="177"/>
    </location>
</feature>
<feature type="region of interest" description="Disordered" evidence="2">
    <location>
        <begin position="143"/>
        <end position="183"/>
    </location>
</feature>
<feature type="region of interest" description="3 X 8 AA repeats of S-P-R-R-R-[PR]-S-Q">
    <location>
        <begin position="155"/>
        <end position="177"/>
    </location>
</feature>
<feature type="region of interest" description="RNA binding" evidence="1">
    <location>
        <begin position="177"/>
        <end position="183"/>
    </location>
</feature>
<feature type="short sequence motif" description="Bipartite nuclear localization signal" evidence="1">
    <location>
        <begin position="158"/>
        <end position="175"/>
    </location>
</feature>
<feature type="compositionally biased region" description="Basic residues" evidence="2">
    <location>
        <begin position="149"/>
        <end position="176"/>
    </location>
</feature>
<feature type="modified residue" description="Phosphoserine; by host" evidence="1">
    <location>
        <position position="155"/>
    </location>
</feature>
<feature type="modified residue" description="Phosphoserine; by host" evidence="1">
    <location>
        <position position="162"/>
    </location>
</feature>
<feature type="modified residue" description="Phosphoserine; by host" evidence="1">
    <location>
        <position position="170"/>
    </location>
</feature>
<proteinExistence type="inferred from homology"/>
<gene>
    <name evidence="1" type="primary">C</name>
</gene>
<reference key="1">
    <citation type="journal article" date="2002" name="J. Virol.">
        <title>Hepatitis B virus of genotype B with or without recombination with genotype C over the precore region plus the core gene.</title>
        <authorList>
            <person name="Sugauchi F."/>
            <person name="Orito E."/>
            <person name="Ichida T."/>
            <person name="Kato H."/>
            <person name="Sakugawa H."/>
            <person name="Kakumu S."/>
            <person name="Ishida T."/>
            <person name="Chutaputti A."/>
            <person name="Lai C.L."/>
            <person name="Ueda R."/>
            <person name="Miyakawa Y."/>
            <person name="Mizokami M."/>
        </authorList>
    </citation>
    <scope>NUCLEOTIDE SEQUENCE [GENOMIC DNA]</scope>
</reference>
<comment type="function">
    <text evidence="1">Self assembles to form an icosahedral capsid. Most capsids appear to be large particles with an icosahedral symmetry of T=4 and consist of 240 copies of capsid protein, though a fraction forms smaller T=3 particles consisting of 180 capsid proteins. Entering capsids are transported along microtubules to the nucleus. Phosphorylation of the capsid is thought to induce exposure of nuclear localization signal in the C-terminal portion of the capsid protein that allows binding to the nuclear pore complex via the importin (karyopherin-) alpha and beta. Capsids are imported in intact form through the nuclear pore into the nuclear basket, where it probably binds NUP153. Only capsids that contain the mature viral genome can release the viral DNA and capsid protein into the nucleoplasm. Immature capsids get stuck in the basket. Capsids encapsulate the pre-genomic RNA and the P protein. Pre-genomic RNA is reverse-transcribed into DNA while the capsid is still in the cytoplasm. The capsid can then either be directed to the nucleus, providing more genomes for transcription, or bud through the endoplasmic reticulum to provide new virions.</text>
</comment>
<comment type="subunit">
    <text evidence="1">Homodimerizes, then multimerizes. Interacts with cytosol exposed regions of viral L glycoprotein present in the reticulum-to-Golgi compartment. Interacts with human FLNB. Phosphorylated form interacts with host importin alpha; this interaction depends on the exposure of the NLS, which itself depends upon genome maturation and/or phosphorylation of the capsid protein. Interacts with host NUP153.</text>
</comment>
<comment type="subcellular location">
    <subcellularLocation>
        <location evidence="1">Virion</location>
    </subcellularLocation>
    <subcellularLocation>
        <location evidence="1">Host cytoplasm</location>
    </subcellularLocation>
</comment>
<comment type="alternative products">
    <event type="alternative initiation"/>
    <isoform>
        <id>P0C677-1</id>
        <name>Capsid protein</name>
        <sequence type="displayed"/>
    </isoform>
    <isoform>
        <id>P0C6K6-1</id>
        <name>External core antigen</name>
        <sequence type="external"/>
    </isoform>
</comment>
<comment type="PTM">
    <text evidence="1">Phosphorylated by host SRPK1, SRPK2, and maybe protein kinase C or GAPDH. Phosphorylation is critical for pregenomic RNA packaging. Protein kinase C phosphorylation is stimulated by HBx protein and may play a role in transport of the viral genome to the nucleus at the late step during the viral replication cycle.</text>
</comment>
<comment type="similarity">
    <text evidence="1">Belongs to the orthohepadnavirus core antigen family.</text>
</comment>